<accession>A9MTJ4</accession>
<name>HUTG_SALPB</name>
<feature type="chain" id="PRO_1000083414" description="Formimidoylglutamase">
    <location>
        <begin position="1"/>
        <end position="313"/>
    </location>
</feature>
<feature type="binding site" evidence="1">
    <location>
        <position position="130"/>
    </location>
    <ligand>
        <name>Mn(2+)</name>
        <dbReference type="ChEBI" id="CHEBI:29035"/>
        <label>1</label>
    </ligand>
</feature>
<feature type="binding site" evidence="1">
    <location>
        <position position="155"/>
    </location>
    <ligand>
        <name>Mn(2+)</name>
        <dbReference type="ChEBI" id="CHEBI:29035"/>
        <label>1</label>
    </ligand>
</feature>
<feature type="binding site" evidence="1">
    <location>
        <position position="155"/>
    </location>
    <ligand>
        <name>Mn(2+)</name>
        <dbReference type="ChEBI" id="CHEBI:29035"/>
        <label>2</label>
    </ligand>
</feature>
<feature type="binding site" evidence="1">
    <location>
        <position position="157"/>
    </location>
    <ligand>
        <name>Mn(2+)</name>
        <dbReference type="ChEBI" id="CHEBI:29035"/>
        <label>2</label>
    </ligand>
</feature>
<feature type="binding site" evidence="1">
    <location>
        <position position="159"/>
    </location>
    <ligand>
        <name>Mn(2+)</name>
        <dbReference type="ChEBI" id="CHEBI:29035"/>
        <label>1</label>
    </ligand>
</feature>
<feature type="binding site" evidence="1">
    <location>
        <position position="241"/>
    </location>
    <ligand>
        <name>Mn(2+)</name>
        <dbReference type="ChEBI" id="CHEBI:29035"/>
        <label>1</label>
    </ligand>
</feature>
<feature type="binding site" evidence="1">
    <location>
        <position position="241"/>
    </location>
    <ligand>
        <name>Mn(2+)</name>
        <dbReference type="ChEBI" id="CHEBI:29035"/>
        <label>2</label>
    </ligand>
</feature>
<feature type="binding site" evidence="1">
    <location>
        <position position="243"/>
    </location>
    <ligand>
        <name>Mn(2+)</name>
        <dbReference type="ChEBI" id="CHEBI:29035"/>
        <label>2</label>
    </ligand>
</feature>
<sequence>MTQWYPASPALWQGRDDSIEAPDARRLFQTVTRSETFSPENWQQKIALMGFACDEGVKRNAGRPGAAGGPDALRKALANMASHQGHERLVDLGNWVAPTPDLEGAQQVLRDAVSRCLRAGMRTLVLGGGHETAFGHGAGVLDAFAQESVGIINLDAHLDLRQTDRATSGTPFRQLAQLCDAQSRAFHYACFGVSRAANTQALWREAQWRNVTVVEDLDCHDALAQMAQFIDKVDKIYLTIDLDVLPVWEMPAVSAPAALGVPLIQVLRLIEPVCRSGKLQAADLVEFNPRFDEDGAAARVAARLGWQIAHWWR</sequence>
<organism>
    <name type="scientific">Salmonella paratyphi B (strain ATCC BAA-1250 / SPB7)</name>
    <dbReference type="NCBI Taxonomy" id="1016998"/>
    <lineage>
        <taxon>Bacteria</taxon>
        <taxon>Pseudomonadati</taxon>
        <taxon>Pseudomonadota</taxon>
        <taxon>Gammaproteobacteria</taxon>
        <taxon>Enterobacterales</taxon>
        <taxon>Enterobacteriaceae</taxon>
        <taxon>Salmonella</taxon>
    </lineage>
</organism>
<gene>
    <name evidence="1" type="primary">hutG</name>
    <name type="ordered locus">SPAB_02731</name>
</gene>
<proteinExistence type="inferred from homology"/>
<reference key="1">
    <citation type="submission" date="2007-11" db="EMBL/GenBank/DDBJ databases">
        <authorList>
            <consortium name="The Salmonella enterica serovar Paratyphi B Genome Sequencing Project"/>
            <person name="McClelland M."/>
            <person name="Sanderson E.K."/>
            <person name="Porwollik S."/>
            <person name="Spieth J."/>
            <person name="Clifton W.S."/>
            <person name="Fulton R."/>
            <person name="Cordes M."/>
            <person name="Wollam A."/>
            <person name="Shah N."/>
            <person name="Pepin K."/>
            <person name="Bhonagiri V."/>
            <person name="Nash W."/>
            <person name="Johnson M."/>
            <person name="Thiruvilangam P."/>
            <person name="Wilson R."/>
        </authorList>
    </citation>
    <scope>NUCLEOTIDE SEQUENCE [LARGE SCALE GENOMIC DNA]</scope>
    <source>
        <strain>ATCC BAA-1250 / SPB7</strain>
    </source>
</reference>
<keyword id="KW-0369">Histidine metabolism</keyword>
<keyword id="KW-0378">Hydrolase</keyword>
<keyword id="KW-0464">Manganese</keyword>
<keyword id="KW-0479">Metal-binding</keyword>
<comment type="function">
    <text evidence="1">Catalyzes the conversion of N-formimidoyl-L-glutamate to L-glutamate and formamide.</text>
</comment>
<comment type="catalytic activity">
    <reaction evidence="1">
        <text>N-formimidoyl-L-glutamate + H2O = formamide + L-glutamate</text>
        <dbReference type="Rhea" id="RHEA:22492"/>
        <dbReference type="ChEBI" id="CHEBI:15377"/>
        <dbReference type="ChEBI" id="CHEBI:16397"/>
        <dbReference type="ChEBI" id="CHEBI:29985"/>
        <dbReference type="ChEBI" id="CHEBI:58928"/>
        <dbReference type="EC" id="3.5.3.8"/>
    </reaction>
</comment>
<comment type="cofactor">
    <cofactor evidence="1">
        <name>Mn(2+)</name>
        <dbReference type="ChEBI" id="CHEBI:29035"/>
    </cofactor>
    <text evidence="1">Binds 2 manganese ions per subunit.</text>
</comment>
<comment type="pathway">
    <text evidence="1">Amino-acid degradation; L-histidine degradation into L-glutamate; L-glutamate from N-formimidoyl-L-glutamate (hydrolase route): step 1/1.</text>
</comment>
<comment type="similarity">
    <text evidence="1">Belongs to the arginase family.</text>
</comment>
<evidence type="ECO:0000255" key="1">
    <source>
        <dbReference type="HAMAP-Rule" id="MF_00737"/>
    </source>
</evidence>
<protein>
    <recommendedName>
        <fullName evidence="1">Formimidoylglutamase</fullName>
        <ecNumber evidence="1">3.5.3.8</ecNumber>
    </recommendedName>
    <alternativeName>
        <fullName evidence="1">Formiminoglutamase</fullName>
    </alternativeName>
    <alternativeName>
        <fullName evidence="1">Formiminoglutamate hydrolase</fullName>
    </alternativeName>
</protein>
<dbReference type="EC" id="3.5.3.8" evidence="1"/>
<dbReference type="EMBL" id="CP000886">
    <property type="protein sequence ID" value="ABX68109.1"/>
    <property type="molecule type" value="Genomic_DNA"/>
</dbReference>
<dbReference type="RefSeq" id="WP_000195696.1">
    <property type="nucleotide sequence ID" value="NC_010102.1"/>
</dbReference>
<dbReference type="SMR" id="A9MTJ4"/>
<dbReference type="KEGG" id="spq:SPAB_02731"/>
<dbReference type="PATRIC" id="fig|1016998.12.peg.2584"/>
<dbReference type="HOGENOM" id="CLU_039478_2_0_6"/>
<dbReference type="BioCyc" id="SENT1016998:SPAB_RS11100-MONOMER"/>
<dbReference type="UniPathway" id="UPA00379">
    <property type="reaction ID" value="UER00552"/>
</dbReference>
<dbReference type="Proteomes" id="UP000008556">
    <property type="component" value="Chromosome"/>
</dbReference>
<dbReference type="GO" id="GO:0008783">
    <property type="term" value="F:agmatinase activity"/>
    <property type="evidence" value="ECO:0007669"/>
    <property type="project" value="TreeGrafter"/>
</dbReference>
<dbReference type="GO" id="GO:0050415">
    <property type="term" value="F:formimidoylglutamase activity"/>
    <property type="evidence" value="ECO:0007669"/>
    <property type="project" value="UniProtKB-UniRule"/>
</dbReference>
<dbReference type="GO" id="GO:0030145">
    <property type="term" value="F:manganese ion binding"/>
    <property type="evidence" value="ECO:0007669"/>
    <property type="project" value="UniProtKB-UniRule"/>
</dbReference>
<dbReference type="GO" id="GO:0019556">
    <property type="term" value="P:L-histidine catabolic process to glutamate and formamide"/>
    <property type="evidence" value="ECO:0007669"/>
    <property type="project" value="UniProtKB-UniPathway"/>
</dbReference>
<dbReference type="GO" id="GO:0019557">
    <property type="term" value="P:L-histidine catabolic process to glutamate and formate"/>
    <property type="evidence" value="ECO:0007669"/>
    <property type="project" value="UniProtKB-UniPathway"/>
</dbReference>
<dbReference type="GO" id="GO:0033389">
    <property type="term" value="P:putrescine biosynthetic process from arginine, via agmatine"/>
    <property type="evidence" value="ECO:0007669"/>
    <property type="project" value="TreeGrafter"/>
</dbReference>
<dbReference type="CDD" id="cd09988">
    <property type="entry name" value="Formimidoylglutamase"/>
    <property type="match status" value="1"/>
</dbReference>
<dbReference type="FunFam" id="3.40.800.10:FF:000010">
    <property type="entry name" value="Formimidoylglutamase"/>
    <property type="match status" value="1"/>
</dbReference>
<dbReference type="Gene3D" id="3.40.800.10">
    <property type="entry name" value="Ureohydrolase domain"/>
    <property type="match status" value="1"/>
</dbReference>
<dbReference type="HAMAP" id="MF_00737">
    <property type="entry name" value="Formimidoylglutam"/>
    <property type="match status" value="1"/>
</dbReference>
<dbReference type="InterPro" id="IPR005923">
    <property type="entry name" value="HutG"/>
</dbReference>
<dbReference type="InterPro" id="IPR006035">
    <property type="entry name" value="Ureohydrolase"/>
</dbReference>
<dbReference type="InterPro" id="IPR023696">
    <property type="entry name" value="Ureohydrolase_dom_sf"/>
</dbReference>
<dbReference type="NCBIfam" id="TIGR01227">
    <property type="entry name" value="hutG"/>
    <property type="match status" value="1"/>
</dbReference>
<dbReference type="PANTHER" id="PTHR11358">
    <property type="entry name" value="ARGINASE/AGMATINASE"/>
    <property type="match status" value="1"/>
</dbReference>
<dbReference type="PANTHER" id="PTHR11358:SF35">
    <property type="entry name" value="FORMIMIDOYLGLUTAMASE"/>
    <property type="match status" value="1"/>
</dbReference>
<dbReference type="Pfam" id="PF00491">
    <property type="entry name" value="Arginase"/>
    <property type="match status" value="1"/>
</dbReference>
<dbReference type="PIRSF" id="PIRSF036979">
    <property type="entry name" value="Arginase"/>
    <property type="match status" value="1"/>
</dbReference>
<dbReference type="SUPFAM" id="SSF52768">
    <property type="entry name" value="Arginase/deacetylase"/>
    <property type="match status" value="1"/>
</dbReference>
<dbReference type="PROSITE" id="PS51409">
    <property type="entry name" value="ARGINASE_2"/>
    <property type="match status" value="1"/>
</dbReference>